<organism>
    <name type="scientific">Salinibacter ruber (strain DSM 13855 / M31)</name>
    <dbReference type="NCBI Taxonomy" id="309807"/>
    <lineage>
        <taxon>Bacteria</taxon>
        <taxon>Pseudomonadati</taxon>
        <taxon>Rhodothermota</taxon>
        <taxon>Rhodothermia</taxon>
        <taxon>Rhodothermales</taxon>
        <taxon>Salinibacteraceae</taxon>
        <taxon>Salinibacter</taxon>
    </lineage>
</organism>
<name>Y2225_SALRD</name>
<reference key="1">
    <citation type="journal article" date="2005" name="Proc. Natl. Acad. Sci. U.S.A.">
        <title>The genome of Salinibacter ruber: convergence and gene exchange among hyperhalophilic bacteria and archaea.</title>
        <authorList>
            <person name="Mongodin E.F."/>
            <person name="Nelson K.E."/>
            <person name="Daugherty S."/>
            <person name="DeBoy R.T."/>
            <person name="Wister J."/>
            <person name="Khouri H."/>
            <person name="Weidman J."/>
            <person name="Walsh D.A."/>
            <person name="Papke R.T."/>
            <person name="Sanchez Perez G."/>
            <person name="Sharma A.K."/>
            <person name="Nesbo C.L."/>
            <person name="MacLeod D."/>
            <person name="Bapteste E."/>
            <person name="Doolittle W.F."/>
            <person name="Charlebois R.L."/>
            <person name="Legault B."/>
            <person name="Rodriguez-Valera F."/>
        </authorList>
    </citation>
    <scope>NUCLEOTIDE SEQUENCE [LARGE SCALE GENOMIC DNA]</scope>
    <source>
        <strain>DSM 13855 / CECT 5946 / M31</strain>
    </source>
</reference>
<evidence type="ECO:0000255" key="1">
    <source>
        <dbReference type="HAMAP-Rule" id="MF_01600"/>
    </source>
</evidence>
<evidence type="ECO:0000256" key="2">
    <source>
        <dbReference type="SAM" id="MobiDB-lite"/>
    </source>
</evidence>
<keyword id="KW-1003">Cell membrane</keyword>
<keyword id="KW-0472">Membrane</keyword>
<keyword id="KW-1185">Reference proteome</keyword>
<keyword id="KW-0812">Transmembrane</keyword>
<keyword id="KW-1133">Transmembrane helix</keyword>
<feature type="chain" id="PRO_0000291294" description="UPF0182 protein SRU_2225">
    <location>
        <begin position="1"/>
        <end position="952"/>
    </location>
</feature>
<feature type="transmembrane region" description="Helical" evidence="1">
    <location>
        <begin position="12"/>
        <end position="32"/>
    </location>
</feature>
<feature type="transmembrane region" description="Helical" evidence="1">
    <location>
        <begin position="52"/>
        <end position="72"/>
    </location>
</feature>
<feature type="transmembrane region" description="Helical" evidence="1">
    <location>
        <begin position="109"/>
        <end position="129"/>
    </location>
</feature>
<feature type="transmembrane region" description="Helical" evidence="1">
    <location>
        <begin position="168"/>
        <end position="188"/>
    </location>
</feature>
<feature type="transmembrane region" description="Helical" evidence="1">
    <location>
        <begin position="207"/>
        <end position="227"/>
    </location>
</feature>
<feature type="transmembrane region" description="Helical" evidence="1">
    <location>
        <begin position="247"/>
        <end position="267"/>
    </location>
</feature>
<feature type="transmembrane region" description="Helical" evidence="1">
    <location>
        <begin position="277"/>
        <end position="297"/>
    </location>
</feature>
<feature type="region of interest" description="Disordered" evidence="2">
    <location>
        <begin position="917"/>
        <end position="952"/>
    </location>
</feature>
<feature type="compositionally biased region" description="Polar residues" evidence="2">
    <location>
        <begin position="931"/>
        <end position="940"/>
    </location>
</feature>
<proteinExistence type="inferred from homology"/>
<comment type="subcellular location">
    <subcellularLocation>
        <location evidence="1">Cell membrane</location>
        <topology evidence="1">Multi-pass membrane protein</topology>
    </subcellularLocation>
</comment>
<comment type="similarity">
    <text evidence="1">Belongs to the UPF0182 family.</text>
</comment>
<sequence>MSILRSSRLLQILLGIIGVVFTVLLVTPGLVVEYFWLSELDYSSVFWTIRGAQVLLFVLVFLVAGLYFGGNFRVLIGNIPPLWASRWAQEGEAPEVGGEPLTRDRLQRLGYVVAGVLSLLFAAGFSGRWNDLLRFWYAGSYGQADPVYGVDLAFYMLELPFLQSLQSAVVGLAFLGLLALVTGYVIAGQIGIQDGGFEADSGALRHLGANLIFLLLGWAWGFYLDLYELLQEGGGAVYGAGYTDVNVVIPALYVMVAATLVLAGLVGLNLYRRRLRLLGIGGAGYLVLLVGGLVLAPSLVTQLTVLPSELQVERPYLENNIDMTREAYALGDFKERSYPAQPDLPADAVEQNEETIDNVRLWDPRLLIDTYRQLQEIRLYYEFYSVDVDRYMLDGDYRQVMVSPRELTQQLPEDTWDNRHVRFTHGYGSVSNLVAREGSEGSPEFLTQDIPPQSKYESLDVDNPALYYGERTPTYRIVPAGVPGDSLELDYPRSGENKYTRYGGEGGVSVGSFWKQLLFSYYMGDFNILLTDYIQDDSQIQFWNQVEERVRHVAPFLKLDKDPYLVHGDDRHYYIADAYTTSNSFPYSEPIRGQQGYQGTRYIRNSVKVVVDAYNGDVSLYVSNPEDPIIQTYQRIFPDLFQPLDAMPELLQNHIRYPQDFFEIQMERYRRYHQTQPQVFYNNEDLWTRPQEQYANQQRKMEPYYILTDLPGKDDAGLEFMLMLPMTPDGRDNMIGWVAARSDPPNYGEVVVYELPKDRLIRGPNQIESRIDQDTEISQQLSLWDQRGSSVIRGNLIVVPIEESFLYVEPIYLIADEIQIPEMQRVIAATDQDVAMKRTLRQSLNSVLGEQVVETRDQALAQMQQAAQTAQAASPEQVEGLERAKELIQEARDALQGGDFATFGDRFDELQQVLNDVPLPDTTGTVPPPTSSDTTGTMTAPTGDVSEVTGGS</sequence>
<gene>
    <name type="ordered locus">SRU_2225</name>
</gene>
<accession>Q2S0F1</accession>
<dbReference type="EMBL" id="CP000159">
    <property type="protein sequence ID" value="ABC44761.1"/>
    <property type="molecule type" value="Genomic_DNA"/>
</dbReference>
<dbReference type="RefSeq" id="WP_011404951.1">
    <property type="nucleotide sequence ID" value="NC_007677.1"/>
</dbReference>
<dbReference type="RefSeq" id="YP_446330.1">
    <property type="nucleotide sequence ID" value="NC_007677.1"/>
</dbReference>
<dbReference type="SMR" id="Q2S0F1"/>
<dbReference type="EnsemblBacteria" id="ABC44761">
    <property type="protein sequence ID" value="ABC44761"/>
    <property type="gene ID" value="SRU_2225"/>
</dbReference>
<dbReference type="KEGG" id="sru:SRU_2225"/>
<dbReference type="PATRIC" id="fig|309807.25.peg.2318"/>
<dbReference type="eggNOG" id="COG1615">
    <property type="taxonomic scope" value="Bacteria"/>
</dbReference>
<dbReference type="HOGENOM" id="CLU_007733_0_0_10"/>
<dbReference type="OrthoDB" id="9763654at2"/>
<dbReference type="Proteomes" id="UP000008674">
    <property type="component" value="Chromosome"/>
</dbReference>
<dbReference type="GO" id="GO:0005576">
    <property type="term" value="C:extracellular region"/>
    <property type="evidence" value="ECO:0007669"/>
    <property type="project" value="TreeGrafter"/>
</dbReference>
<dbReference type="GO" id="GO:0005886">
    <property type="term" value="C:plasma membrane"/>
    <property type="evidence" value="ECO:0007669"/>
    <property type="project" value="UniProtKB-SubCell"/>
</dbReference>
<dbReference type="HAMAP" id="MF_01600">
    <property type="entry name" value="UPF0182"/>
    <property type="match status" value="1"/>
</dbReference>
<dbReference type="InterPro" id="IPR005372">
    <property type="entry name" value="UPF0182"/>
</dbReference>
<dbReference type="PANTHER" id="PTHR39344">
    <property type="entry name" value="UPF0182 PROTEIN SLL1060"/>
    <property type="match status" value="1"/>
</dbReference>
<dbReference type="PANTHER" id="PTHR39344:SF1">
    <property type="entry name" value="UPF0182 PROTEIN SLL1060"/>
    <property type="match status" value="1"/>
</dbReference>
<dbReference type="Pfam" id="PF03699">
    <property type="entry name" value="UPF0182"/>
    <property type="match status" value="1"/>
</dbReference>
<protein>
    <recommendedName>
        <fullName evidence="1">UPF0182 protein SRU_2225</fullName>
    </recommendedName>
</protein>